<sequence length="365" mass="40964">MVAEKPKTLTSLEGDDKLNSNFVRDEDERPKVAYNEFSNDIPVISLAGIDGEKRGEICRKIVEACEDWGIFQVVDHGVGDDLIADMTRLAREFFALPAEEKLRFDMSGGKKGGFIVSSHLQGEVVQDWREIVTYFSYPTNSRDYTRWPDKPEGWIKVTEEYSNKLMTLACTLLGVLSEAMGLELEALTKACVDMDQKIVVNYYPKCPQPDLTLGLKRHTDPGTITLLLQDQVGGLQATRDGGKTWITVQPVPGAFVVNLGDHGHFLSNGRFKNADHQAVVNSECSRLSIATFQNPSPDATVYPLAIREGENSIMEEPITFADLYRRKMAKDLEIARHKRLAKEEMPFKELDEAKFESKSIDQILA</sequence>
<reference key="1">
    <citation type="journal article" date="1993" name="Eur. J. Biochem.">
        <title>Molecular characterization of flavanone 3 beta-hydroxylases. Consensus sequence, comparison with related enzymes and the role of conserved histidine residues.</title>
        <authorList>
            <person name="Britsch L."/>
            <person name="Dedio J."/>
            <person name="Saedler H."/>
            <person name="Forkmann G."/>
        </authorList>
    </citation>
    <scope>NUCLEOTIDE SEQUENCE [MRNA]</scope>
    <source>
        <tissue>Flower bud</tissue>
    </source>
</reference>
<name>FL3H_DIACA</name>
<accession>Q05964</accession>
<feature type="chain" id="PRO_0000067285" description="Naringenin,2-oxoglutarate 3-dioxygenase">
    <location>
        <begin position="1"/>
        <end position="365"/>
    </location>
</feature>
<feature type="domain" description="Fe2OG dioxygenase" evidence="2">
    <location>
        <begin position="191"/>
        <end position="295"/>
    </location>
</feature>
<feature type="binding site" evidence="2">
    <location>
        <position position="218"/>
    </location>
    <ligand>
        <name>Fe cation</name>
        <dbReference type="ChEBI" id="CHEBI:24875"/>
    </ligand>
</feature>
<feature type="binding site" evidence="2">
    <location>
        <position position="220"/>
    </location>
    <ligand>
        <name>Fe cation</name>
        <dbReference type="ChEBI" id="CHEBI:24875"/>
    </ligand>
</feature>
<feature type="binding site" evidence="2">
    <location>
        <position position="276"/>
    </location>
    <ligand>
        <name>Fe cation</name>
        <dbReference type="ChEBI" id="CHEBI:24875"/>
    </ligand>
</feature>
<feature type="binding site" evidence="2">
    <location>
        <position position="286"/>
    </location>
    <ligand>
        <name>2-oxoglutarate</name>
        <dbReference type="ChEBI" id="CHEBI:16810"/>
    </ligand>
</feature>
<gene>
    <name type="primary">FHT</name>
</gene>
<dbReference type="EC" id="1.14.11.9" evidence="1"/>
<dbReference type="EMBL" id="X72592">
    <property type="protein sequence ID" value="CAA51190.1"/>
    <property type="molecule type" value="mRNA"/>
</dbReference>
<dbReference type="EMBL" id="X70378">
    <property type="protein sequence ID" value="CAA49839.1"/>
    <property type="molecule type" value="Genomic_DNA"/>
</dbReference>
<dbReference type="PIR" id="S31921">
    <property type="entry name" value="S31921"/>
</dbReference>
<dbReference type="SMR" id="Q05964"/>
<dbReference type="UniPathway" id="UPA00154"/>
<dbReference type="GO" id="GO:0045486">
    <property type="term" value="F:flavanone 3-dioxygenase activity"/>
    <property type="evidence" value="ECO:0007669"/>
    <property type="project" value="UniProtKB-EC"/>
</dbReference>
<dbReference type="GO" id="GO:0031418">
    <property type="term" value="F:L-ascorbic acid binding"/>
    <property type="evidence" value="ECO:0007669"/>
    <property type="project" value="UniProtKB-KW"/>
</dbReference>
<dbReference type="GO" id="GO:0046872">
    <property type="term" value="F:metal ion binding"/>
    <property type="evidence" value="ECO:0007669"/>
    <property type="project" value="UniProtKB-KW"/>
</dbReference>
<dbReference type="GO" id="GO:0009813">
    <property type="term" value="P:flavonoid biosynthetic process"/>
    <property type="evidence" value="ECO:0007669"/>
    <property type="project" value="UniProtKB-UniPathway"/>
</dbReference>
<dbReference type="FunFam" id="2.60.120.330:FF:000016">
    <property type="entry name" value="Naringenin,2-oxoglutarate 3-dioxygenase"/>
    <property type="match status" value="1"/>
</dbReference>
<dbReference type="Gene3D" id="2.60.120.330">
    <property type="entry name" value="B-lactam Antibiotic, Isopenicillin N Synthase, Chain"/>
    <property type="match status" value="1"/>
</dbReference>
<dbReference type="InterPro" id="IPR026992">
    <property type="entry name" value="DIOX_N"/>
</dbReference>
<dbReference type="InterPro" id="IPR044861">
    <property type="entry name" value="IPNS-like_FE2OG_OXY"/>
</dbReference>
<dbReference type="InterPro" id="IPR027443">
    <property type="entry name" value="IPNS-like_sf"/>
</dbReference>
<dbReference type="InterPro" id="IPR005123">
    <property type="entry name" value="Oxoglu/Fe-dep_dioxygenase_dom"/>
</dbReference>
<dbReference type="InterPro" id="IPR050295">
    <property type="entry name" value="Plant_2OG-oxidoreductases"/>
</dbReference>
<dbReference type="PANTHER" id="PTHR47991">
    <property type="entry name" value="OXOGLUTARATE/IRON-DEPENDENT DIOXYGENASE"/>
    <property type="match status" value="1"/>
</dbReference>
<dbReference type="Pfam" id="PF03171">
    <property type="entry name" value="2OG-FeII_Oxy"/>
    <property type="match status" value="1"/>
</dbReference>
<dbReference type="Pfam" id="PF14226">
    <property type="entry name" value="DIOX_N"/>
    <property type="match status" value="1"/>
</dbReference>
<dbReference type="SUPFAM" id="SSF51197">
    <property type="entry name" value="Clavaminate synthase-like"/>
    <property type="match status" value="1"/>
</dbReference>
<dbReference type="PROSITE" id="PS51471">
    <property type="entry name" value="FE2OG_OXY"/>
    <property type="match status" value="1"/>
</dbReference>
<organism>
    <name type="scientific">Dianthus caryophyllus</name>
    <name type="common">Carnation</name>
    <name type="synonym">Clove pink</name>
    <dbReference type="NCBI Taxonomy" id="3570"/>
    <lineage>
        <taxon>Eukaryota</taxon>
        <taxon>Viridiplantae</taxon>
        <taxon>Streptophyta</taxon>
        <taxon>Embryophyta</taxon>
        <taxon>Tracheophyta</taxon>
        <taxon>Spermatophyta</taxon>
        <taxon>Magnoliopsida</taxon>
        <taxon>eudicotyledons</taxon>
        <taxon>Gunneridae</taxon>
        <taxon>Pentapetalae</taxon>
        <taxon>Caryophyllales</taxon>
        <taxon>Caryophyllaceae</taxon>
        <taxon>Caryophylleae</taxon>
        <taxon>Dianthus</taxon>
    </lineage>
</organism>
<comment type="function">
    <text>Catalyzes the 3-beta-hydroxylation of 2S-flavanones to 2R,3R-dihydroflavonols which are intermediates in the biosynthesis of flavonols, anthocyanidins, catechins and proanthocyanidins in plants.</text>
</comment>
<comment type="catalytic activity">
    <reaction evidence="1">
        <text>a (2S)-flavan-4-one + 2-oxoglutarate + O2 = a (2R,3R)-dihydroflavonol + succinate + CO2</text>
        <dbReference type="Rhea" id="RHEA:18621"/>
        <dbReference type="ChEBI" id="CHEBI:15379"/>
        <dbReference type="ChEBI" id="CHEBI:16526"/>
        <dbReference type="ChEBI" id="CHEBI:16810"/>
        <dbReference type="ChEBI" id="CHEBI:30031"/>
        <dbReference type="ChEBI" id="CHEBI:138188"/>
        <dbReference type="ChEBI" id="CHEBI:140377"/>
        <dbReference type="EC" id="1.14.11.9"/>
    </reaction>
</comment>
<comment type="cofactor">
    <cofactor evidence="2">
        <name>Fe(2+)</name>
        <dbReference type="ChEBI" id="CHEBI:29033"/>
    </cofactor>
    <text evidence="2">Binds 1 Fe(2+) ion per subunit.</text>
</comment>
<comment type="cofactor">
    <cofactor>
        <name>L-ascorbate</name>
        <dbReference type="ChEBI" id="CHEBI:38290"/>
    </cofactor>
</comment>
<comment type="pathway">
    <text>Secondary metabolite biosynthesis; flavonoid biosynthesis.</text>
</comment>
<comment type="similarity">
    <text evidence="3">Belongs to the iron/ascorbate-dependent oxidoreductase family.</text>
</comment>
<evidence type="ECO:0000250" key="1">
    <source>
        <dbReference type="UniProtKB" id="Q7XZQ7"/>
    </source>
</evidence>
<evidence type="ECO:0000255" key="2">
    <source>
        <dbReference type="PROSITE-ProRule" id="PRU00805"/>
    </source>
</evidence>
<evidence type="ECO:0000305" key="3"/>
<keyword id="KW-0223">Dioxygenase</keyword>
<keyword id="KW-0284">Flavonoid biosynthesis</keyword>
<keyword id="KW-0408">Iron</keyword>
<keyword id="KW-0479">Metal-binding</keyword>
<keyword id="KW-0560">Oxidoreductase</keyword>
<keyword id="KW-0847">Vitamin C</keyword>
<proteinExistence type="evidence at transcript level"/>
<protein>
    <recommendedName>
        <fullName>Naringenin,2-oxoglutarate 3-dioxygenase</fullName>
        <ecNumber evidence="1">1.14.11.9</ecNumber>
    </recommendedName>
    <alternativeName>
        <fullName>FHT</fullName>
    </alternativeName>
    <alternativeName>
        <fullName>Flavanone-3-hydroxylase</fullName>
        <shortName>F3H</shortName>
    </alternativeName>
</protein>